<reference key="1">
    <citation type="journal article" date="2003" name="Arch. Biochem. Biophys.">
        <title>cDNA isolation, functional expression, and characterization of (+)-alpha-pinene synthase and (-)-alpha-pinene synthase from loblolly pine (Pinus taeda): stereocontrol in pinene biosynthesis.</title>
        <authorList>
            <person name="Phillips M.A."/>
            <person name="Wildung M.R."/>
            <person name="Williams D.C."/>
            <person name="Hyatt D.C."/>
            <person name="Croteau R."/>
        </authorList>
    </citation>
    <scope>NUCLEOTIDE SEQUENCE [MRNA]</scope>
    <scope>FUNCTION</scope>
    <scope>CATALYTIC ACTIVITY</scope>
</reference>
<sequence>MSSLAVDDAERRVGDYHPNLWDDALIQSLSTPYGASPYRDVAEKLIGEIKEMFASISIEDGDDEICYFLQRLWMIDNVERLGISRHFENEIKAAMEDVYSRHWSDKGIACGRHSVVADLNSTALAFRTLRLHGYSVCSDVFKIFQDQKGEFACSADQTEGEIKGILNLLRASLIAFPGERILQEAEIFATTYLKEALPKIQGSRLSQEIEYVLEYGWLTDLPRLETRNYIEVLAEEITPYFKKPCMAVEKLLKLAKIEFNLFHSLQQTELKHLSRWWKDSGFAQLTFTRHRHVEFYTLASCIAMEPKHSAFRLGFAKLCYLGIVLDDIYDTYGKMEELELFTAAIKRWDTSTTECLPEYMKGVYMAFYDCVNEMARQAEKTQGWDTLDYARKTWEALIDAFMEEAKWISSGYVPTFQKYLDNGKVSFGYRAATLQPILTLDIPLPLHILQEIDFPSSFNDLASSILRLRGDICGYQAERSRGEQASSISCYMKDNPGSTEEDALSHVNAMIGDKIPEFNWEFMKPSKAPISSKKYAFDILRAFYHLYKYRDGFSIAKIETKKLVMRTVLDPVPM</sequence>
<accession>Q84KL5</accession>
<protein>
    <recommendedName>
        <fullName>Alpha-farnesene synthase</fullName>
        <ecNumber>4.2.3.46</ecNumber>
    </recommendedName>
</protein>
<gene>
    <name type="primary">PT5</name>
</gene>
<evidence type="ECO:0000250" key="1"/>
<evidence type="ECO:0000269" key="2">
    <source>
    </source>
</evidence>
<evidence type="ECO:0000305" key="3"/>
<comment type="function">
    <text evidence="2">Involved in sesquiterpene (C15) biosynthesis. The major product is alpha-farnesene.</text>
</comment>
<comment type="catalytic activity">
    <reaction evidence="2">
        <text>(2E,6E)-farnesyl diphosphate = (3E,6E)-alpha-farnesene + diphosphate</text>
        <dbReference type="Rhea" id="RHEA:27421"/>
        <dbReference type="ChEBI" id="CHEBI:10280"/>
        <dbReference type="ChEBI" id="CHEBI:33019"/>
        <dbReference type="ChEBI" id="CHEBI:175763"/>
        <dbReference type="EC" id="4.2.3.46"/>
    </reaction>
</comment>
<comment type="cofactor">
    <cofactor evidence="1">
        <name>Mn(2+)</name>
        <dbReference type="ChEBI" id="CHEBI:29035"/>
    </cofactor>
    <text evidence="1">Binds 3 Mn(2+) ions per subunit.</text>
</comment>
<comment type="pathway">
    <text>Terpene metabolism; oleoresin biosynthesis.</text>
</comment>
<comment type="subcellular location">
    <subcellularLocation>
        <location evidence="3">Cytoplasm</location>
    </subcellularLocation>
</comment>
<comment type="domain">
    <text>The Asp-Asp-Xaa-Xaa-Asp/Glu (DDXXD/E) motif is important for the catalytic activity, presumably through binding to Mg(2+).</text>
</comment>
<comment type="similarity">
    <text evidence="3">Belongs to the terpene synthase family. Tpsd subfamily.</text>
</comment>
<name>PT5_PINTA</name>
<organism>
    <name type="scientific">Pinus taeda</name>
    <name type="common">Loblolly pine</name>
    <dbReference type="NCBI Taxonomy" id="3352"/>
    <lineage>
        <taxon>Eukaryota</taxon>
        <taxon>Viridiplantae</taxon>
        <taxon>Streptophyta</taxon>
        <taxon>Embryophyta</taxon>
        <taxon>Tracheophyta</taxon>
        <taxon>Spermatophyta</taxon>
        <taxon>Pinopsida</taxon>
        <taxon>Pinidae</taxon>
        <taxon>Conifers I</taxon>
        <taxon>Pinales</taxon>
        <taxon>Pinaceae</taxon>
        <taxon>Pinus</taxon>
        <taxon>Pinus subgen. Pinus</taxon>
    </lineage>
</organism>
<dbReference type="EC" id="4.2.3.46"/>
<dbReference type="EMBL" id="AF543528">
    <property type="protein sequence ID" value="AAO61226.1"/>
    <property type="molecule type" value="mRNA"/>
</dbReference>
<dbReference type="SMR" id="Q84KL5"/>
<dbReference type="UniPathway" id="UPA00924"/>
<dbReference type="GO" id="GO:0005737">
    <property type="term" value="C:cytoplasm"/>
    <property type="evidence" value="ECO:0007669"/>
    <property type="project" value="UniProtKB-SubCell"/>
</dbReference>
<dbReference type="GO" id="GO:0052578">
    <property type="term" value="F:alpha-farnesene synthase activity"/>
    <property type="evidence" value="ECO:0007669"/>
    <property type="project" value="RHEA"/>
</dbReference>
<dbReference type="GO" id="GO:0000287">
    <property type="term" value="F:magnesium ion binding"/>
    <property type="evidence" value="ECO:0007669"/>
    <property type="project" value="InterPro"/>
</dbReference>
<dbReference type="GO" id="GO:0010334">
    <property type="term" value="F:sesquiterpene synthase activity"/>
    <property type="evidence" value="ECO:0000314"/>
    <property type="project" value="UniProtKB"/>
</dbReference>
<dbReference type="GO" id="GO:0016102">
    <property type="term" value="P:diterpenoid biosynthetic process"/>
    <property type="evidence" value="ECO:0007669"/>
    <property type="project" value="InterPro"/>
</dbReference>
<dbReference type="GO" id="GO:0045338">
    <property type="term" value="P:farnesyl diphosphate metabolic process"/>
    <property type="evidence" value="ECO:0000314"/>
    <property type="project" value="UniProtKB"/>
</dbReference>
<dbReference type="CDD" id="cd00684">
    <property type="entry name" value="Terpene_cyclase_plant_C1"/>
    <property type="match status" value="1"/>
</dbReference>
<dbReference type="FunFam" id="1.50.10.130:FF:000002">
    <property type="entry name" value="Ent-copalyl diphosphate synthase, chloroplastic"/>
    <property type="match status" value="1"/>
</dbReference>
<dbReference type="FunFam" id="1.10.600.10:FF:000005">
    <property type="entry name" value="Ent-kaur-16-ene synthase, chloroplastic"/>
    <property type="match status" value="1"/>
</dbReference>
<dbReference type="Gene3D" id="1.10.600.10">
    <property type="entry name" value="Farnesyl Diphosphate Synthase"/>
    <property type="match status" value="1"/>
</dbReference>
<dbReference type="Gene3D" id="1.50.10.130">
    <property type="entry name" value="Terpene synthase, N-terminal domain"/>
    <property type="match status" value="1"/>
</dbReference>
<dbReference type="InterPro" id="IPR008949">
    <property type="entry name" value="Isoprenoid_synthase_dom_sf"/>
</dbReference>
<dbReference type="InterPro" id="IPR034741">
    <property type="entry name" value="Terpene_cyclase-like_1_C"/>
</dbReference>
<dbReference type="InterPro" id="IPR044814">
    <property type="entry name" value="Terpene_cyclase_plant_C1"/>
</dbReference>
<dbReference type="InterPro" id="IPR001906">
    <property type="entry name" value="Terpene_synth_N"/>
</dbReference>
<dbReference type="InterPro" id="IPR036965">
    <property type="entry name" value="Terpene_synth_N_sf"/>
</dbReference>
<dbReference type="InterPro" id="IPR050148">
    <property type="entry name" value="Terpene_synthase-like"/>
</dbReference>
<dbReference type="InterPro" id="IPR005630">
    <property type="entry name" value="Terpene_synthase_metal-bd"/>
</dbReference>
<dbReference type="InterPro" id="IPR008930">
    <property type="entry name" value="Terpenoid_cyclase/PrenylTrfase"/>
</dbReference>
<dbReference type="PANTHER" id="PTHR31225">
    <property type="entry name" value="OS04G0344100 PROTEIN-RELATED"/>
    <property type="match status" value="1"/>
</dbReference>
<dbReference type="PANTHER" id="PTHR31225:SF98">
    <property type="entry name" value="TERPENE SYNTHASE 9-RELATED"/>
    <property type="match status" value="1"/>
</dbReference>
<dbReference type="Pfam" id="PF01397">
    <property type="entry name" value="Terpene_synth"/>
    <property type="match status" value="1"/>
</dbReference>
<dbReference type="Pfam" id="PF03936">
    <property type="entry name" value="Terpene_synth_C"/>
    <property type="match status" value="1"/>
</dbReference>
<dbReference type="SFLD" id="SFLDS00005">
    <property type="entry name" value="Isoprenoid_Synthase_Type_I"/>
    <property type="match status" value="1"/>
</dbReference>
<dbReference type="SFLD" id="SFLDG01019">
    <property type="entry name" value="Terpene_Cyclase_Like_1_C_Termi"/>
    <property type="match status" value="1"/>
</dbReference>
<dbReference type="SFLD" id="SFLDG01014">
    <property type="entry name" value="Terpene_Cyclase_Like_1_N-term"/>
    <property type="match status" value="1"/>
</dbReference>
<dbReference type="SUPFAM" id="SSF48239">
    <property type="entry name" value="Terpenoid cyclases/Protein prenyltransferases"/>
    <property type="match status" value="1"/>
</dbReference>
<dbReference type="SUPFAM" id="SSF48576">
    <property type="entry name" value="Terpenoid synthases"/>
    <property type="match status" value="1"/>
</dbReference>
<keyword id="KW-0963">Cytoplasm</keyword>
<keyword id="KW-0456">Lyase</keyword>
<keyword id="KW-0460">Magnesium</keyword>
<keyword id="KW-0464">Manganese</keyword>
<keyword id="KW-0479">Metal-binding</keyword>
<feature type="chain" id="PRO_0000419234" description="Alpha-farnesene synthase">
    <location>
        <begin position="1"/>
        <end position="574"/>
    </location>
</feature>
<feature type="short sequence motif" description="DDXXD motif">
    <location>
        <begin position="326"/>
        <end position="330"/>
    </location>
</feature>
<feature type="binding site" evidence="1">
    <location>
        <position position="326"/>
    </location>
    <ligand>
        <name>Mn(2+)</name>
        <dbReference type="ChEBI" id="CHEBI:29035"/>
        <label>1</label>
    </ligand>
</feature>
<feature type="binding site" evidence="1">
    <location>
        <position position="326"/>
    </location>
    <ligand>
        <name>Mn(2+)</name>
        <dbReference type="ChEBI" id="CHEBI:29035"/>
        <label>2</label>
    </ligand>
</feature>
<feature type="binding site" evidence="1">
    <location>
        <position position="330"/>
    </location>
    <ligand>
        <name>Mn(2+)</name>
        <dbReference type="ChEBI" id="CHEBI:29035"/>
        <label>1</label>
    </ligand>
</feature>
<feature type="binding site" evidence="1">
    <location>
        <position position="330"/>
    </location>
    <ligand>
        <name>Mn(2+)</name>
        <dbReference type="ChEBI" id="CHEBI:29035"/>
        <label>2</label>
    </ligand>
</feature>
<feature type="binding site" evidence="1">
    <location>
        <position position="478"/>
    </location>
    <ligand>
        <name>Mn(2+)</name>
        <dbReference type="ChEBI" id="CHEBI:29035"/>
        <label>3</label>
    </ligand>
</feature>
<proteinExistence type="evidence at protein level"/>